<keyword id="KW-0614">Plasmid</keyword>
<proteinExistence type="predicted"/>
<sequence length="155" mass="16287">MTEQQQGSRRDVVAGGIFIAIAALFAIQGSRYEFGTATQMGPGFFPVVLAVLLAIFGAFTMIAGFRKVPEAHDGPVSWRALVLVCLALAIFGAGARPLGLVPVVVICTFMSAMASRKNTVFSAGVMALVMAVLCFVIFKIGLAVTLPTFGPVFGR</sequence>
<geneLocation type="plasmid">
    <name>pTrAB3</name>
</geneLocation>
<name>YTZ1_AGRVI</name>
<protein>
    <recommendedName>
        <fullName>Uncharacterized 16.3 kDa protein in TAR-I ttuC' 3'region</fullName>
    </recommendedName>
    <alternativeName>
        <fullName>ORFZ1</fullName>
    </alternativeName>
</protein>
<accession>P70794</accession>
<organism>
    <name type="scientific">Agrobacterium vitis</name>
    <name type="common">Rhizobium vitis</name>
    <dbReference type="NCBI Taxonomy" id="373"/>
    <lineage>
        <taxon>Bacteria</taxon>
        <taxon>Pseudomonadati</taxon>
        <taxon>Pseudomonadota</taxon>
        <taxon>Alphaproteobacteria</taxon>
        <taxon>Hyphomicrobiales</taxon>
        <taxon>Rhizobiaceae</taxon>
        <taxon>Rhizobium/Agrobacterium group</taxon>
        <taxon>Agrobacterium</taxon>
    </lineage>
</organism>
<reference key="1">
    <citation type="journal article" date="1996" name="Mol. Plant Microbe Interact.">
        <title>Characterization and distribution of tartrate utilization genes in the grapevine pathogen Agrobacterium vitis.</title>
        <authorList>
            <person name="Salomone J.-Y."/>
            <person name="Crouzet P."/>
            <person name="de Ruffray P."/>
            <person name="Otten L."/>
        </authorList>
    </citation>
    <scope>NUCLEOTIDE SEQUENCE [GENOMIC DNA]</scope>
    <source>
        <strain>AB3</strain>
    </source>
</reference>
<dbReference type="EMBL" id="U32375">
    <property type="protein sequence ID" value="AAB61630.1"/>
    <property type="molecule type" value="Genomic_DNA"/>
</dbReference>
<dbReference type="RefSeq" id="WP_032488983.1">
    <property type="nucleotide sequence ID" value="NZ_JABAEH010000039.1"/>
</dbReference>
<dbReference type="InterPro" id="IPR009936">
    <property type="entry name" value="DUF1468"/>
</dbReference>
<dbReference type="Pfam" id="PF07331">
    <property type="entry name" value="TctB"/>
    <property type="match status" value="1"/>
</dbReference>
<feature type="chain" id="PRO_0000066539" description="Uncharacterized 16.3 kDa protein in TAR-I ttuC' 3'region">
    <location>
        <begin position="1"/>
        <end position="155"/>
    </location>
</feature>